<name>PTH_MYCPU</name>
<protein>
    <recommendedName>
        <fullName evidence="1">Peptidyl-tRNA hydrolase</fullName>
        <shortName evidence="1">Pth</shortName>
        <ecNumber evidence="1">3.1.1.29</ecNumber>
    </recommendedName>
</protein>
<reference key="1">
    <citation type="journal article" date="2001" name="Nucleic Acids Res.">
        <title>The complete genome sequence of the murine respiratory pathogen Mycoplasma pulmonis.</title>
        <authorList>
            <person name="Chambaud I."/>
            <person name="Heilig R."/>
            <person name="Ferris S."/>
            <person name="Barbe V."/>
            <person name="Samson D."/>
            <person name="Galisson F."/>
            <person name="Moszer I."/>
            <person name="Dybvig K."/>
            <person name="Wroblewski H."/>
            <person name="Viari A."/>
            <person name="Rocha E.P.C."/>
            <person name="Blanchard A."/>
        </authorList>
    </citation>
    <scope>NUCLEOTIDE SEQUENCE [LARGE SCALE GENOMIC DNA]</scope>
    <source>
        <strain>UAB CTIP</strain>
    </source>
</reference>
<proteinExistence type="inferred from homology"/>
<organism>
    <name type="scientific">Mycoplasmopsis pulmonis (strain UAB CTIP)</name>
    <name type="common">Mycoplasma pulmonis</name>
    <dbReference type="NCBI Taxonomy" id="272635"/>
    <lineage>
        <taxon>Bacteria</taxon>
        <taxon>Bacillati</taxon>
        <taxon>Mycoplasmatota</taxon>
        <taxon>Mycoplasmoidales</taxon>
        <taxon>Metamycoplasmataceae</taxon>
        <taxon>Mycoplasmopsis</taxon>
    </lineage>
</organism>
<feature type="chain" id="PRO_0000187778" description="Peptidyl-tRNA hydrolase">
    <location>
        <begin position="1"/>
        <end position="186"/>
    </location>
</feature>
<feature type="active site" description="Proton acceptor" evidence="1">
    <location>
        <position position="19"/>
    </location>
</feature>
<feature type="binding site" evidence="1">
    <location>
        <position position="14"/>
    </location>
    <ligand>
        <name>tRNA</name>
        <dbReference type="ChEBI" id="CHEBI:17843"/>
    </ligand>
</feature>
<feature type="binding site" evidence="1">
    <location>
        <position position="60"/>
    </location>
    <ligand>
        <name>tRNA</name>
        <dbReference type="ChEBI" id="CHEBI:17843"/>
    </ligand>
</feature>
<feature type="binding site" evidence="1">
    <location>
        <position position="62"/>
    </location>
    <ligand>
        <name>tRNA</name>
        <dbReference type="ChEBI" id="CHEBI:17843"/>
    </ligand>
</feature>
<feature type="site" description="Discriminates between blocked and unblocked aminoacyl-tRNA" evidence="1">
    <location>
        <position position="9"/>
    </location>
</feature>
<feature type="site" description="Stabilizes the basic form of H active site to accept a proton" evidence="1">
    <location>
        <position position="87"/>
    </location>
</feature>
<evidence type="ECO:0000255" key="1">
    <source>
        <dbReference type="HAMAP-Rule" id="MF_00083"/>
    </source>
</evidence>
<sequence>MKLIVGLGNPGDEYDKTRHNLGFMVIDKIAEKLNVKLDKEKFNGIFYKGENYIISKPLTYMNNSGNFVYDIKNFFDIEIDNIIIIYDEIDLKVGQASIKIKGSANGQRGMQSIIEKLKTENIKRIKIGVSRPLYEPVSSYILKKIPENEKETFEKVIDELADKLLTYIFNDFKTFINVSKLKNSKK</sequence>
<accession>Q98PE2</accession>
<comment type="function">
    <text evidence="1">Hydrolyzes ribosome-free peptidyl-tRNAs (with 1 or more amino acids incorporated), which drop off the ribosome during protein synthesis, or as a result of ribosome stalling.</text>
</comment>
<comment type="function">
    <text evidence="1">Catalyzes the release of premature peptidyl moieties from peptidyl-tRNA molecules trapped in stalled 50S ribosomal subunits, and thus maintains levels of free tRNAs and 50S ribosomes.</text>
</comment>
<comment type="catalytic activity">
    <reaction evidence="1">
        <text>an N-acyl-L-alpha-aminoacyl-tRNA + H2O = an N-acyl-L-amino acid + a tRNA + H(+)</text>
        <dbReference type="Rhea" id="RHEA:54448"/>
        <dbReference type="Rhea" id="RHEA-COMP:10123"/>
        <dbReference type="Rhea" id="RHEA-COMP:13883"/>
        <dbReference type="ChEBI" id="CHEBI:15377"/>
        <dbReference type="ChEBI" id="CHEBI:15378"/>
        <dbReference type="ChEBI" id="CHEBI:59874"/>
        <dbReference type="ChEBI" id="CHEBI:78442"/>
        <dbReference type="ChEBI" id="CHEBI:138191"/>
        <dbReference type="EC" id="3.1.1.29"/>
    </reaction>
</comment>
<comment type="subunit">
    <text evidence="1">Monomer.</text>
</comment>
<comment type="subcellular location">
    <subcellularLocation>
        <location evidence="1">Cytoplasm</location>
    </subcellularLocation>
</comment>
<comment type="similarity">
    <text evidence="1">Belongs to the PTH family.</text>
</comment>
<gene>
    <name evidence="1" type="primary">pth</name>
    <name type="ordered locus">MYPU_7810</name>
</gene>
<keyword id="KW-0963">Cytoplasm</keyword>
<keyword id="KW-0378">Hydrolase</keyword>
<keyword id="KW-1185">Reference proteome</keyword>
<keyword id="KW-0694">RNA-binding</keyword>
<keyword id="KW-0820">tRNA-binding</keyword>
<dbReference type="EC" id="3.1.1.29" evidence="1"/>
<dbReference type="EMBL" id="AL445565">
    <property type="protein sequence ID" value="CAC13954.1"/>
    <property type="molecule type" value="Genomic_DNA"/>
</dbReference>
<dbReference type="PIR" id="E90609">
    <property type="entry name" value="E90609"/>
</dbReference>
<dbReference type="RefSeq" id="WP_010925581.1">
    <property type="nucleotide sequence ID" value="NC_002771.1"/>
</dbReference>
<dbReference type="SMR" id="Q98PE2"/>
<dbReference type="STRING" id="272635.gene:17577392"/>
<dbReference type="KEGG" id="mpu:MYPU_7810"/>
<dbReference type="eggNOG" id="COG0193">
    <property type="taxonomic scope" value="Bacteria"/>
</dbReference>
<dbReference type="HOGENOM" id="CLU_062456_4_1_14"/>
<dbReference type="BioCyc" id="MPUL272635:G1GT6-789-MONOMER"/>
<dbReference type="Proteomes" id="UP000000528">
    <property type="component" value="Chromosome"/>
</dbReference>
<dbReference type="GO" id="GO:0005737">
    <property type="term" value="C:cytoplasm"/>
    <property type="evidence" value="ECO:0007669"/>
    <property type="project" value="UniProtKB-SubCell"/>
</dbReference>
<dbReference type="GO" id="GO:0004045">
    <property type="term" value="F:peptidyl-tRNA hydrolase activity"/>
    <property type="evidence" value="ECO:0007669"/>
    <property type="project" value="UniProtKB-UniRule"/>
</dbReference>
<dbReference type="GO" id="GO:0000049">
    <property type="term" value="F:tRNA binding"/>
    <property type="evidence" value="ECO:0007669"/>
    <property type="project" value="UniProtKB-UniRule"/>
</dbReference>
<dbReference type="GO" id="GO:0006515">
    <property type="term" value="P:protein quality control for misfolded or incompletely synthesized proteins"/>
    <property type="evidence" value="ECO:0007669"/>
    <property type="project" value="UniProtKB-UniRule"/>
</dbReference>
<dbReference type="GO" id="GO:0072344">
    <property type="term" value="P:rescue of stalled ribosome"/>
    <property type="evidence" value="ECO:0007669"/>
    <property type="project" value="UniProtKB-UniRule"/>
</dbReference>
<dbReference type="CDD" id="cd00462">
    <property type="entry name" value="PTH"/>
    <property type="match status" value="1"/>
</dbReference>
<dbReference type="FunFam" id="3.40.50.1470:FF:000001">
    <property type="entry name" value="Peptidyl-tRNA hydrolase"/>
    <property type="match status" value="1"/>
</dbReference>
<dbReference type="Gene3D" id="3.40.50.1470">
    <property type="entry name" value="Peptidyl-tRNA hydrolase"/>
    <property type="match status" value="1"/>
</dbReference>
<dbReference type="HAMAP" id="MF_00083">
    <property type="entry name" value="Pept_tRNA_hydro_bact"/>
    <property type="match status" value="1"/>
</dbReference>
<dbReference type="InterPro" id="IPR001328">
    <property type="entry name" value="Pept_tRNA_hydro"/>
</dbReference>
<dbReference type="InterPro" id="IPR018171">
    <property type="entry name" value="Pept_tRNA_hydro_CS"/>
</dbReference>
<dbReference type="InterPro" id="IPR036416">
    <property type="entry name" value="Pept_tRNA_hydro_sf"/>
</dbReference>
<dbReference type="NCBIfam" id="TIGR00447">
    <property type="entry name" value="pth"/>
    <property type="match status" value="1"/>
</dbReference>
<dbReference type="PANTHER" id="PTHR17224">
    <property type="entry name" value="PEPTIDYL-TRNA HYDROLASE"/>
    <property type="match status" value="1"/>
</dbReference>
<dbReference type="PANTHER" id="PTHR17224:SF1">
    <property type="entry name" value="PEPTIDYL-TRNA HYDROLASE"/>
    <property type="match status" value="1"/>
</dbReference>
<dbReference type="Pfam" id="PF01195">
    <property type="entry name" value="Pept_tRNA_hydro"/>
    <property type="match status" value="1"/>
</dbReference>
<dbReference type="SUPFAM" id="SSF53178">
    <property type="entry name" value="Peptidyl-tRNA hydrolase-like"/>
    <property type="match status" value="1"/>
</dbReference>
<dbReference type="PROSITE" id="PS01195">
    <property type="entry name" value="PEPT_TRNA_HYDROL_1"/>
    <property type="match status" value="1"/>
</dbReference>